<evidence type="ECO:0000255" key="1">
    <source>
        <dbReference type="HAMAP-Rule" id="MF_01850"/>
    </source>
</evidence>
<sequence length="274" mass="31059">MGTLSVNQNKLQKRLRRLAGEAITDYNMIEDGDKVMVCLSGGKDSYTMLDVLLHLQKVAPIKFDIVAVNMDQKQPGFPEHVLPAYLKELGVEYHIVEKDTYSVVKELVPEGKTTCSLCSRLRRGTLYTFADEIGATKMALGHHRDDIVETFFLNMFFNGALKGMPPKLRADDGRNVVIRPLAYCSEKDIQAYSDMKEFPIIPCNLCGSQENLQRQVVKDMLVEWERKHPGRTESIFRALQNVAPSQLADRNLFDFTSLKIDESATPRFLDVLNI</sequence>
<proteinExistence type="inferred from homology"/>
<feature type="chain" id="PRO_0000348794" description="tRNA-cytidine(32) 2-sulfurtransferase">
    <location>
        <begin position="1"/>
        <end position="274"/>
    </location>
</feature>
<feature type="short sequence motif" description="PP-loop motif" evidence="1">
    <location>
        <begin position="40"/>
        <end position="45"/>
    </location>
</feature>
<feature type="binding site" evidence="1">
    <location>
        <position position="115"/>
    </location>
    <ligand>
        <name>[4Fe-4S] cluster</name>
        <dbReference type="ChEBI" id="CHEBI:49883"/>
    </ligand>
</feature>
<feature type="binding site" evidence="1">
    <location>
        <position position="118"/>
    </location>
    <ligand>
        <name>[4Fe-4S] cluster</name>
        <dbReference type="ChEBI" id="CHEBI:49883"/>
    </ligand>
</feature>
<feature type="binding site" evidence="1">
    <location>
        <position position="206"/>
    </location>
    <ligand>
        <name>[4Fe-4S] cluster</name>
        <dbReference type="ChEBI" id="CHEBI:49883"/>
    </ligand>
</feature>
<protein>
    <recommendedName>
        <fullName evidence="1">tRNA-cytidine(32) 2-sulfurtransferase</fullName>
        <ecNumber evidence="1">2.8.1.-</ecNumber>
    </recommendedName>
    <alternativeName>
        <fullName evidence="1">Two-thiocytidine biosynthesis protein A</fullName>
    </alternativeName>
    <alternativeName>
        <fullName evidence="1">tRNA 2-thiocytidine biosynthesis protein TtcA</fullName>
    </alternativeName>
</protein>
<reference key="1">
    <citation type="journal article" date="2006" name="Nat. Biotechnol.">
        <title>Complete genome sequence of the entomopathogenic and metabolically versatile soil bacterium Pseudomonas entomophila.</title>
        <authorList>
            <person name="Vodovar N."/>
            <person name="Vallenet D."/>
            <person name="Cruveiller S."/>
            <person name="Rouy Z."/>
            <person name="Barbe V."/>
            <person name="Acosta C."/>
            <person name="Cattolico L."/>
            <person name="Jubin C."/>
            <person name="Lajus A."/>
            <person name="Segurens B."/>
            <person name="Vacherie B."/>
            <person name="Wincker P."/>
            <person name="Weissenbach J."/>
            <person name="Lemaitre B."/>
            <person name="Medigue C."/>
            <person name="Boccard F."/>
        </authorList>
    </citation>
    <scope>NUCLEOTIDE SEQUENCE [LARGE SCALE GENOMIC DNA]</scope>
    <source>
        <strain>L48</strain>
    </source>
</reference>
<comment type="function">
    <text evidence="1">Catalyzes the ATP-dependent 2-thiolation of cytidine in position 32 of tRNA, to form 2-thiocytidine (s(2)C32). The sulfur atoms are provided by the cysteine/cysteine desulfurase (IscS) system.</text>
</comment>
<comment type="catalytic activity">
    <reaction evidence="1">
        <text>cytidine(32) in tRNA + S-sulfanyl-L-cysteinyl-[cysteine desulfurase] + AH2 + ATP = 2-thiocytidine(32) in tRNA + L-cysteinyl-[cysteine desulfurase] + A + AMP + diphosphate + H(+)</text>
        <dbReference type="Rhea" id="RHEA:57048"/>
        <dbReference type="Rhea" id="RHEA-COMP:10288"/>
        <dbReference type="Rhea" id="RHEA-COMP:12157"/>
        <dbReference type="Rhea" id="RHEA-COMP:12158"/>
        <dbReference type="Rhea" id="RHEA-COMP:14821"/>
        <dbReference type="ChEBI" id="CHEBI:13193"/>
        <dbReference type="ChEBI" id="CHEBI:15378"/>
        <dbReference type="ChEBI" id="CHEBI:17499"/>
        <dbReference type="ChEBI" id="CHEBI:29950"/>
        <dbReference type="ChEBI" id="CHEBI:30616"/>
        <dbReference type="ChEBI" id="CHEBI:33019"/>
        <dbReference type="ChEBI" id="CHEBI:61963"/>
        <dbReference type="ChEBI" id="CHEBI:82748"/>
        <dbReference type="ChEBI" id="CHEBI:141453"/>
        <dbReference type="ChEBI" id="CHEBI:456215"/>
    </reaction>
    <physiologicalReaction direction="left-to-right" evidence="1">
        <dbReference type="Rhea" id="RHEA:57049"/>
    </physiologicalReaction>
</comment>
<comment type="cofactor">
    <cofactor evidence="1">
        <name>Mg(2+)</name>
        <dbReference type="ChEBI" id="CHEBI:18420"/>
    </cofactor>
</comment>
<comment type="cofactor">
    <cofactor evidence="1">
        <name>[4Fe-4S] cluster</name>
        <dbReference type="ChEBI" id="CHEBI:49883"/>
    </cofactor>
    <text evidence="1">Binds 1 [4Fe-4S] cluster per subunit. The cluster is chelated by three Cys residues, the fourth Fe has a free coordination site that may bind a sulfur atom transferred from the persulfide of IscS.</text>
</comment>
<comment type="pathway">
    <text evidence="1">tRNA modification.</text>
</comment>
<comment type="subunit">
    <text evidence="1">Homodimer.</text>
</comment>
<comment type="subcellular location">
    <subcellularLocation>
        <location evidence="1">Cytoplasm</location>
    </subcellularLocation>
</comment>
<comment type="miscellaneous">
    <text evidence="1">The thiolation reaction likely consists of two steps: a first activation step by ATP to form an adenylated intermediate of the target base of tRNA, and a second nucleophilic substitution step of the sulfur (S) atom supplied by the hydrosulfide attached to the Fe-S cluster.</text>
</comment>
<comment type="similarity">
    <text evidence="1">Belongs to the TtcA family.</text>
</comment>
<organism>
    <name type="scientific">Pseudomonas entomophila (strain L48)</name>
    <dbReference type="NCBI Taxonomy" id="384676"/>
    <lineage>
        <taxon>Bacteria</taxon>
        <taxon>Pseudomonadati</taxon>
        <taxon>Pseudomonadota</taxon>
        <taxon>Gammaproteobacteria</taxon>
        <taxon>Pseudomonadales</taxon>
        <taxon>Pseudomonadaceae</taxon>
        <taxon>Pseudomonas</taxon>
    </lineage>
</organism>
<dbReference type="EC" id="2.8.1.-" evidence="1"/>
<dbReference type="EMBL" id="CT573326">
    <property type="protein sequence ID" value="CAK14227.1"/>
    <property type="molecule type" value="Genomic_DNA"/>
</dbReference>
<dbReference type="RefSeq" id="WP_011532643.1">
    <property type="nucleotide sequence ID" value="NC_008027.1"/>
</dbReference>
<dbReference type="SMR" id="Q1IDN2"/>
<dbReference type="STRING" id="384676.PSEEN1350"/>
<dbReference type="GeneID" id="58767064"/>
<dbReference type="KEGG" id="pen:PSEEN1350"/>
<dbReference type="eggNOG" id="COG0037">
    <property type="taxonomic scope" value="Bacteria"/>
</dbReference>
<dbReference type="HOGENOM" id="CLU_026481_0_0_6"/>
<dbReference type="OrthoDB" id="9801054at2"/>
<dbReference type="Proteomes" id="UP000000658">
    <property type="component" value="Chromosome"/>
</dbReference>
<dbReference type="GO" id="GO:0005737">
    <property type="term" value="C:cytoplasm"/>
    <property type="evidence" value="ECO:0007669"/>
    <property type="project" value="UniProtKB-SubCell"/>
</dbReference>
<dbReference type="GO" id="GO:0051539">
    <property type="term" value="F:4 iron, 4 sulfur cluster binding"/>
    <property type="evidence" value="ECO:0007669"/>
    <property type="project" value="UniProtKB-UniRule"/>
</dbReference>
<dbReference type="GO" id="GO:0005524">
    <property type="term" value="F:ATP binding"/>
    <property type="evidence" value="ECO:0007669"/>
    <property type="project" value="UniProtKB-UniRule"/>
</dbReference>
<dbReference type="GO" id="GO:0000287">
    <property type="term" value="F:magnesium ion binding"/>
    <property type="evidence" value="ECO:0007669"/>
    <property type="project" value="UniProtKB-UniRule"/>
</dbReference>
<dbReference type="GO" id="GO:0016783">
    <property type="term" value="F:sulfurtransferase activity"/>
    <property type="evidence" value="ECO:0007669"/>
    <property type="project" value="UniProtKB-UniRule"/>
</dbReference>
<dbReference type="GO" id="GO:0000049">
    <property type="term" value="F:tRNA binding"/>
    <property type="evidence" value="ECO:0007669"/>
    <property type="project" value="UniProtKB-KW"/>
</dbReference>
<dbReference type="GO" id="GO:0034227">
    <property type="term" value="P:tRNA thio-modification"/>
    <property type="evidence" value="ECO:0007669"/>
    <property type="project" value="UniProtKB-UniRule"/>
</dbReference>
<dbReference type="CDD" id="cd24138">
    <property type="entry name" value="TtcA-like"/>
    <property type="match status" value="1"/>
</dbReference>
<dbReference type="Gene3D" id="3.40.50.620">
    <property type="entry name" value="HUPs"/>
    <property type="match status" value="1"/>
</dbReference>
<dbReference type="HAMAP" id="MF_01850">
    <property type="entry name" value="TtcA"/>
    <property type="match status" value="1"/>
</dbReference>
<dbReference type="InterPro" id="IPR014729">
    <property type="entry name" value="Rossmann-like_a/b/a_fold"/>
</dbReference>
<dbReference type="InterPro" id="IPR011063">
    <property type="entry name" value="TilS/TtcA_N"/>
</dbReference>
<dbReference type="InterPro" id="IPR012089">
    <property type="entry name" value="tRNA_Cyd_32_2_STrfase"/>
</dbReference>
<dbReference type="InterPro" id="IPR035107">
    <property type="entry name" value="tRNA_thiolation_TtcA_Ctu1"/>
</dbReference>
<dbReference type="NCBIfam" id="NF007972">
    <property type="entry name" value="PRK10696.1"/>
    <property type="match status" value="1"/>
</dbReference>
<dbReference type="PANTHER" id="PTHR43686:SF1">
    <property type="entry name" value="AMINOTRAN_5 DOMAIN-CONTAINING PROTEIN"/>
    <property type="match status" value="1"/>
</dbReference>
<dbReference type="PANTHER" id="PTHR43686">
    <property type="entry name" value="SULFURTRANSFERASE-RELATED"/>
    <property type="match status" value="1"/>
</dbReference>
<dbReference type="Pfam" id="PF01171">
    <property type="entry name" value="ATP_bind_3"/>
    <property type="match status" value="1"/>
</dbReference>
<dbReference type="PIRSF" id="PIRSF004976">
    <property type="entry name" value="ATPase_YdaO"/>
    <property type="match status" value="1"/>
</dbReference>
<dbReference type="SUPFAM" id="SSF52402">
    <property type="entry name" value="Adenine nucleotide alpha hydrolases-like"/>
    <property type="match status" value="1"/>
</dbReference>
<accession>Q1IDN2</accession>
<gene>
    <name evidence="1" type="primary">ttcA</name>
    <name type="ordered locus">PSEEN1350</name>
</gene>
<name>TTCA_PSEE4</name>
<keyword id="KW-0004">4Fe-4S</keyword>
<keyword id="KW-0067">ATP-binding</keyword>
<keyword id="KW-0963">Cytoplasm</keyword>
<keyword id="KW-0408">Iron</keyword>
<keyword id="KW-0411">Iron-sulfur</keyword>
<keyword id="KW-0460">Magnesium</keyword>
<keyword id="KW-0479">Metal-binding</keyword>
<keyword id="KW-0547">Nucleotide-binding</keyword>
<keyword id="KW-0694">RNA-binding</keyword>
<keyword id="KW-0808">Transferase</keyword>
<keyword id="KW-0819">tRNA processing</keyword>
<keyword id="KW-0820">tRNA-binding</keyword>